<protein>
    <recommendedName>
        <fullName>Mitochondrial intermediate peptidase</fullName>
        <shortName>MIP</shortName>
        <ecNumber>3.4.24.59</ecNumber>
    </recommendedName>
    <alternativeName>
        <fullName>Octapeptidyl aminopeptidase</fullName>
    </alternativeName>
</protein>
<gene>
    <name type="primary">OCT1</name>
    <name type="synonym">MEP</name>
    <name type="synonym">MIP</name>
</gene>
<feature type="transit peptide" description="Mitochondrion" evidence="2">
    <location>
        <begin position="1"/>
        <end position="28"/>
    </location>
</feature>
<feature type="chain" id="PRO_0000028581" description="Mitochondrial intermediate peptidase">
    <location>
        <begin position="29"/>
        <end position="775"/>
    </location>
</feature>
<feature type="active site" evidence="3">
    <location>
        <position position="559"/>
    </location>
</feature>
<feature type="binding site" evidence="3">
    <location>
        <position position="558"/>
    </location>
    <ligand>
        <name>Zn(2+)</name>
        <dbReference type="ChEBI" id="CHEBI:29105"/>
        <note>catalytic</note>
    </ligand>
</feature>
<feature type="binding site" evidence="3">
    <location>
        <position position="562"/>
    </location>
    <ligand>
        <name>Zn(2+)</name>
        <dbReference type="ChEBI" id="CHEBI:29105"/>
        <note>catalytic</note>
    </ligand>
</feature>
<feature type="binding site" evidence="3">
    <location>
        <position position="565"/>
    </location>
    <ligand>
        <name>Zn(2+)</name>
        <dbReference type="ChEBI" id="CHEBI:29105"/>
        <note>catalytic</note>
    </ligand>
</feature>
<feature type="sequence variant" description="In strain: UVM 9-4.">
    <original>E</original>
    <variation>G</variation>
    <location>
        <position position="572"/>
    </location>
</feature>
<feature type="sequence variant" description="In strain: UVM 9-1 and CBS 340.81 / UVM 4-40.">
    <original>Q</original>
    <variation>E</variation>
    <location>
        <position position="651"/>
    </location>
</feature>
<feature type="sequence variant" description="In strain: UVM 9-1 and CBS 340.81 / UVM 4-40.">
    <original>K</original>
    <variation>E</variation>
    <location>
        <position position="659"/>
    </location>
</feature>
<feature type="sequence variant" description="In strain: UVM 9-1.">
    <original>R</original>
    <variation>Q</variation>
    <location>
        <position position="729"/>
    </location>
</feature>
<feature type="sequence conflict" description="In Ref. 2." evidence="5" ref="2">
    <original>T</original>
    <variation>D</variation>
    <location>
        <position position="486"/>
    </location>
</feature>
<feature type="sequence conflict" description="In Ref. 2; AAB01366/AAB01368." evidence="5" ref="2">
    <original>HD</original>
    <variation>QH</variation>
    <location>
        <begin position="621"/>
        <end position="622"/>
    </location>
</feature>
<sequence>MIARPARDVLSSATKKQFRFRGCLAARHEPYHTSTSRAGQVAILPATTDDKTLVSVFDSPRSNAKLSAFATTGLFNHSTVTHPRALNSIAQGTLIRAHVLTNRILRAKESREELFKVVKNLDRLSDMLCSVIDLCELVRNSHPDRAWVEAANDAYEGLCQTMNELNTHVGLYDVLKIVLSDPEIVKSLSPEAYRTAMIFWNDFEKSAINLPAKEREEFVALSSEIISLGRMFLEETTAARPPAKIPPSDLAGLKDKGMGVRLQLQAQFTQRDLHVYPGSLQAQMIMRSAPAEEARRRVYIASHSSTPEQIELLERMLSTRARLARLVGRESFAAMALDDKMAKNPTNVARFLDSLMDRSRPYARRALRNLSMRKQEHLHTPPFPTIQAWDRDYYCPPEPPAPPIPLPRLTFGTVLMGLSRLFRHLYGIHLRPVKPIAGEVWHSDVHKLEVVDEERGVIGLIYADVFARRGKASGAAHYTVRCSRRTDDDDVQGDNDELTRMYPDLIKQSEEFEAVGRGPIPGLPGTYQQPLVVLLCEFARPSLGAAVLEWHEVMTLFHEMGHAMHSMIGRTEYQNVSGTRCPTDFVELPSILMEHFLNSRQVLSLFHADSTSSSSQPIGNHDEDPCHSIDTYAQIMLAALDQIYHSPAALQPGFDSTRKLARLHDEKGLIPYVPGTSFQTQFGHLFGYGATYYSYLFDRAIASRVWKDVFSSSPLSRETGERYKQEVLRYGGGKDPWEMVSALLKAPELASGDAEAMATVGRWKIEDEVGLPGRH</sequence>
<keyword id="KW-0378">Hydrolase</keyword>
<keyword id="KW-0479">Metal-binding</keyword>
<keyword id="KW-0482">Metalloprotease</keyword>
<keyword id="KW-0496">Mitochondrion</keyword>
<keyword id="KW-0645">Protease</keyword>
<keyword id="KW-0809">Transit peptide</keyword>
<keyword id="KW-0862">Zinc</keyword>
<dbReference type="EC" id="3.4.24.59"/>
<dbReference type="EMBL" id="L43072">
    <property type="protein sequence ID" value="AAA93531.1"/>
    <property type="molecule type" value="Genomic_DNA"/>
</dbReference>
<dbReference type="EMBL" id="M97179">
    <property type="protein sequence ID" value="AAB01366.1"/>
    <property type="status" value="ALT_INIT"/>
    <property type="molecule type" value="Genomic_DNA"/>
</dbReference>
<dbReference type="EMBL" id="M97180">
    <property type="protein sequence ID" value="AAB01368.1"/>
    <property type="molecule type" value="Genomic_DNA"/>
</dbReference>
<dbReference type="EMBL" id="M97181">
    <property type="protein sequence ID" value="AAB01371.1"/>
    <property type="molecule type" value="Genomic_DNA"/>
</dbReference>
<dbReference type="PIR" id="E37271">
    <property type="entry name" value="E37271"/>
</dbReference>
<dbReference type="PIR" id="F37271">
    <property type="entry name" value="F37271"/>
</dbReference>
<dbReference type="SMR" id="P37932"/>
<dbReference type="VEuPathDB" id="FungiDB:SCHCODRAFT_02684301"/>
<dbReference type="GO" id="GO:0005759">
    <property type="term" value="C:mitochondrial matrix"/>
    <property type="evidence" value="ECO:0007669"/>
    <property type="project" value="UniProtKB-SubCell"/>
</dbReference>
<dbReference type="GO" id="GO:0046872">
    <property type="term" value="F:metal ion binding"/>
    <property type="evidence" value="ECO:0007669"/>
    <property type="project" value="UniProtKB-KW"/>
</dbReference>
<dbReference type="GO" id="GO:0004222">
    <property type="term" value="F:metalloendopeptidase activity"/>
    <property type="evidence" value="ECO:0007669"/>
    <property type="project" value="UniProtKB-EC"/>
</dbReference>
<dbReference type="GO" id="GO:0006518">
    <property type="term" value="P:peptide metabolic process"/>
    <property type="evidence" value="ECO:0007669"/>
    <property type="project" value="TreeGrafter"/>
</dbReference>
<dbReference type="GO" id="GO:0006627">
    <property type="term" value="P:protein processing involved in protein targeting to mitochondrion"/>
    <property type="evidence" value="ECO:0007669"/>
    <property type="project" value="TreeGrafter"/>
</dbReference>
<dbReference type="CDD" id="cd06457">
    <property type="entry name" value="M3A_MIP"/>
    <property type="match status" value="1"/>
</dbReference>
<dbReference type="FunFam" id="3.40.390.10:FF:000055">
    <property type="entry name" value="Related to mitochondrial intermediate peptidase"/>
    <property type="match status" value="1"/>
</dbReference>
<dbReference type="Gene3D" id="3.40.390.10">
    <property type="entry name" value="Collagenase (Catalytic Domain)"/>
    <property type="match status" value="1"/>
</dbReference>
<dbReference type="Gene3D" id="1.10.1370.10">
    <property type="entry name" value="Neurolysin, domain 3"/>
    <property type="match status" value="2"/>
</dbReference>
<dbReference type="InterPro" id="IPR033851">
    <property type="entry name" value="M3A_MIP"/>
</dbReference>
<dbReference type="InterPro" id="IPR024079">
    <property type="entry name" value="MetalloPept_cat_dom_sf"/>
</dbReference>
<dbReference type="InterPro" id="IPR024077">
    <property type="entry name" value="Neurolysin/TOP_dom2"/>
</dbReference>
<dbReference type="InterPro" id="IPR045090">
    <property type="entry name" value="Pept_M3A_M3B"/>
</dbReference>
<dbReference type="InterPro" id="IPR001567">
    <property type="entry name" value="Pept_M3A_M3B_dom"/>
</dbReference>
<dbReference type="PANTHER" id="PTHR11804:SF79">
    <property type="entry name" value="MITOCHONDRIAL INTERMEDIATE PEPTIDASE"/>
    <property type="match status" value="1"/>
</dbReference>
<dbReference type="PANTHER" id="PTHR11804">
    <property type="entry name" value="PROTEASE M3 THIMET OLIGOPEPTIDASE-RELATED"/>
    <property type="match status" value="1"/>
</dbReference>
<dbReference type="Pfam" id="PF01432">
    <property type="entry name" value="Peptidase_M3"/>
    <property type="match status" value="1"/>
</dbReference>
<dbReference type="SUPFAM" id="SSF55486">
    <property type="entry name" value="Metalloproteases ('zincins'), catalytic domain"/>
    <property type="match status" value="1"/>
</dbReference>
<dbReference type="PROSITE" id="PS00142">
    <property type="entry name" value="ZINC_PROTEASE"/>
    <property type="match status" value="1"/>
</dbReference>
<name>PMIP_SCHCO</name>
<proteinExistence type="inferred from homology"/>
<evidence type="ECO:0000250" key="1"/>
<evidence type="ECO:0000255" key="2"/>
<evidence type="ECO:0000255" key="3">
    <source>
        <dbReference type="PROSITE-ProRule" id="PRU10095"/>
    </source>
</evidence>
<evidence type="ECO:0000269" key="4">
    <source>
    </source>
</evidence>
<evidence type="ECO:0000305" key="5"/>
<organism>
    <name type="scientific">Schizophyllum commune</name>
    <name type="common">Split gill fungus</name>
    <dbReference type="NCBI Taxonomy" id="5334"/>
    <lineage>
        <taxon>Eukaryota</taxon>
        <taxon>Fungi</taxon>
        <taxon>Dikarya</taxon>
        <taxon>Basidiomycota</taxon>
        <taxon>Agaricomycotina</taxon>
        <taxon>Agaricomycetes</taxon>
        <taxon>Agaricomycetidae</taxon>
        <taxon>Agaricales</taxon>
        <taxon>Schizophyllaceae</taxon>
        <taxon>Schizophyllum</taxon>
    </lineage>
</organism>
<comment type="function">
    <text evidence="1">Cleaves proteins, imported into the mitochondrion, to their mature size. While most mitochondrial precursor proteins are processed to the mature form in one step by mitochondrial processing peptidase (MPP), the sequential cleavage by MIP of an octapeptide after initial processing by MPP is a required step for a subgroup of nuclear-encoded precursor proteins destined for the matrix or the inner membrane (By similarity).</text>
</comment>
<comment type="catalytic activity">
    <reaction>
        <text>Release of an N-terminal octapeptide as second stage of processing of some proteins imported into the mitochondrion.</text>
        <dbReference type="EC" id="3.4.24.59"/>
    </reaction>
</comment>
<comment type="cofactor">
    <cofactor evidence="1">
        <name>Zn(2+)</name>
        <dbReference type="ChEBI" id="CHEBI:29105"/>
    </cofactor>
    <text evidence="1">Binds 1 zinc ion.</text>
</comment>
<comment type="subcellular location">
    <subcellularLocation>
        <location evidence="4">Mitochondrion matrix</location>
    </subcellularLocation>
</comment>
<comment type="similarity">
    <text evidence="5">Belongs to the peptidase M3 family.</text>
</comment>
<comment type="sequence caution" evidence="5">
    <conflict type="erroneous initiation">
        <sequence resource="EMBL-CDS" id="AAB01366"/>
    </conflict>
</comment>
<reference key="1">
    <citation type="journal article" date="1995" name="Genomics">
        <title>Mammalian mitochondrial intermediate peptidase: structure/function analysis of a new homologue from Schizophyllum commune and relationship to thimet oligopeptidases.</title>
        <authorList>
            <person name="Isaya G."/>
            <person name="Sakati W.R."/>
            <person name="Rollins R.A."/>
            <person name="Shen G.P."/>
            <person name="Hanson L.C."/>
            <person name="Ullrich R.C."/>
            <person name="Novotny C.P."/>
        </authorList>
    </citation>
    <scope>NUCLEOTIDE SEQUENCE [GENOMIC DNA]</scope>
    <scope>SUBCELLULAR LOCATION</scope>
    <source>
        <strain>1-71</strain>
    </source>
</reference>
<reference key="2">
    <citation type="journal article" date="1992" name="Proc. Natl. Acad. Sci. U.S.A.">
        <title>The A alpha mating locus of Schizophyllum commune encodes two dissimilar multiallelic homeodomain proteins.</title>
        <authorList>
            <person name="Stankis M.M."/>
            <person name="Specht C.A."/>
            <person name="Yang H."/>
            <person name="Giasson L."/>
            <person name="Ullrich R.C."/>
            <person name="Novotny C.P."/>
        </authorList>
    </citation>
    <scope>NUCLEOTIDE SEQUENCE [GENOMIC DNA] OF 486-775</scope>
    <source>
        <strain>ATCC 44201 / CBS 340.81 / UVM 4-40 / 4-40</strain>
        <strain>UVM 9-1</strain>
        <strain>UVM 9-4</strain>
    </source>
</reference>
<accession>P37932</accession>